<protein>
    <recommendedName>
        <fullName evidence="1">NADH-quinone oxidoreductase subunit I</fullName>
        <ecNumber evidence="1">7.1.1.-</ecNumber>
    </recommendedName>
    <alternativeName>
        <fullName evidence="1">NADH dehydrogenase I subunit I</fullName>
    </alternativeName>
    <alternativeName>
        <fullName evidence="1">NDH-1 subunit I</fullName>
    </alternativeName>
</protein>
<dbReference type="EC" id="7.1.1.-" evidence="1"/>
<dbReference type="EMBL" id="AE007869">
    <property type="protein sequence ID" value="AAK87073.1"/>
    <property type="molecule type" value="Genomic_DNA"/>
</dbReference>
<dbReference type="PIR" id="AF2733">
    <property type="entry name" value="AF2733"/>
</dbReference>
<dbReference type="PIR" id="H97514">
    <property type="entry name" value="H97514"/>
</dbReference>
<dbReference type="RefSeq" id="NP_354288.1">
    <property type="nucleotide sequence ID" value="NC_003062.2"/>
</dbReference>
<dbReference type="RefSeq" id="WP_006312705.1">
    <property type="nucleotide sequence ID" value="NC_003062.2"/>
</dbReference>
<dbReference type="SMR" id="Q8UFW9"/>
<dbReference type="STRING" id="176299.Atu1278"/>
<dbReference type="EnsemblBacteria" id="AAK87073">
    <property type="protein sequence ID" value="AAK87073"/>
    <property type="gene ID" value="Atu1278"/>
</dbReference>
<dbReference type="GeneID" id="1133316"/>
<dbReference type="KEGG" id="atu:Atu1278"/>
<dbReference type="PATRIC" id="fig|176299.10.peg.1295"/>
<dbReference type="eggNOG" id="COG1143">
    <property type="taxonomic scope" value="Bacteria"/>
</dbReference>
<dbReference type="HOGENOM" id="CLU_067218_5_1_5"/>
<dbReference type="OrthoDB" id="9808559at2"/>
<dbReference type="PhylomeDB" id="Q8UFW9"/>
<dbReference type="BioCyc" id="AGRO:ATU1278-MONOMER"/>
<dbReference type="Proteomes" id="UP000000813">
    <property type="component" value="Chromosome circular"/>
</dbReference>
<dbReference type="GO" id="GO:0005886">
    <property type="term" value="C:plasma membrane"/>
    <property type="evidence" value="ECO:0007669"/>
    <property type="project" value="UniProtKB-SubCell"/>
</dbReference>
<dbReference type="GO" id="GO:0051539">
    <property type="term" value="F:4 iron, 4 sulfur cluster binding"/>
    <property type="evidence" value="ECO:0007669"/>
    <property type="project" value="UniProtKB-KW"/>
</dbReference>
<dbReference type="GO" id="GO:0005506">
    <property type="term" value="F:iron ion binding"/>
    <property type="evidence" value="ECO:0007669"/>
    <property type="project" value="UniProtKB-UniRule"/>
</dbReference>
<dbReference type="GO" id="GO:0050136">
    <property type="term" value="F:NADH:ubiquinone reductase (non-electrogenic) activity"/>
    <property type="evidence" value="ECO:0007669"/>
    <property type="project" value="UniProtKB-UniRule"/>
</dbReference>
<dbReference type="GO" id="GO:0048038">
    <property type="term" value="F:quinone binding"/>
    <property type="evidence" value="ECO:0007669"/>
    <property type="project" value="UniProtKB-KW"/>
</dbReference>
<dbReference type="GO" id="GO:0009060">
    <property type="term" value="P:aerobic respiration"/>
    <property type="evidence" value="ECO:0007669"/>
    <property type="project" value="TreeGrafter"/>
</dbReference>
<dbReference type="FunFam" id="3.30.70.3270:FF:000001">
    <property type="entry name" value="NADH-quinone oxidoreductase subunit I 1"/>
    <property type="match status" value="1"/>
</dbReference>
<dbReference type="Gene3D" id="3.30.70.3270">
    <property type="match status" value="1"/>
</dbReference>
<dbReference type="HAMAP" id="MF_01351">
    <property type="entry name" value="NDH1_NuoI"/>
    <property type="match status" value="1"/>
</dbReference>
<dbReference type="InterPro" id="IPR017896">
    <property type="entry name" value="4Fe4S_Fe-S-bd"/>
</dbReference>
<dbReference type="InterPro" id="IPR017900">
    <property type="entry name" value="4Fe4S_Fe_S_CS"/>
</dbReference>
<dbReference type="InterPro" id="IPR010226">
    <property type="entry name" value="NADH_quinone_OxRdtase_chainI"/>
</dbReference>
<dbReference type="NCBIfam" id="TIGR01971">
    <property type="entry name" value="NuoI"/>
    <property type="match status" value="1"/>
</dbReference>
<dbReference type="NCBIfam" id="NF004538">
    <property type="entry name" value="PRK05888.1-4"/>
    <property type="match status" value="1"/>
</dbReference>
<dbReference type="NCBIfam" id="NF004539">
    <property type="entry name" value="PRK05888.1-5"/>
    <property type="match status" value="1"/>
</dbReference>
<dbReference type="PANTHER" id="PTHR10849:SF20">
    <property type="entry name" value="NADH DEHYDROGENASE [UBIQUINONE] IRON-SULFUR PROTEIN 8, MITOCHONDRIAL"/>
    <property type="match status" value="1"/>
</dbReference>
<dbReference type="PANTHER" id="PTHR10849">
    <property type="entry name" value="NADH DEHYDROGENASE UBIQUINONE IRON-SULFUR PROTEIN 8, MITOCHONDRIAL"/>
    <property type="match status" value="1"/>
</dbReference>
<dbReference type="Pfam" id="PF12838">
    <property type="entry name" value="Fer4_7"/>
    <property type="match status" value="1"/>
</dbReference>
<dbReference type="SUPFAM" id="SSF54862">
    <property type="entry name" value="4Fe-4S ferredoxins"/>
    <property type="match status" value="1"/>
</dbReference>
<dbReference type="PROSITE" id="PS00198">
    <property type="entry name" value="4FE4S_FER_1"/>
    <property type="match status" value="2"/>
</dbReference>
<dbReference type="PROSITE" id="PS51379">
    <property type="entry name" value="4FE4S_FER_2"/>
    <property type="match status" value="2"/>
</dbReference>
<sequence>MASLSQAVNSLFLKEFVGAIFLTMRHFFKQKATINYPFEKGPVSPRFRGEHALRRYPNGEERCIACKLCEAICPAQAITIEAGPRRNDGTRRTVRYDIDMVKCIYCGFCQEACPVDAIVEGPNFEFATETREELYFDKQRLLDNGDRWEREIARNLALDAPYR</sequence>
<proteinExistence type="inferred from homology"/>
<accession>Q8UFW9</accession>
<accession>Q7CZL4</accession>
<name>NUOI_AGRFC</name>
<organism>
    <name type="scientific">Agrobacterium fabrum (strain C58 / ATCC 33970)</name>
    <name type="common">Agrobacterium tumefaciens (strain C58)</name>
    <dbReference type="NCBI Taxonomy" id="176299"/>
    <lineage>
        <taxon>Bacteria</taxon>
        <taxon>Pseudomonadati</taxon>
        <taxon>Pseudomonadota</taxon>
        <taxon>Alphaproteobacteria</taxon>
        <taxon>Hyphomicrobiales</taxon>
        <taxon>Rhizobiaceae</taxon>
        <taxon>Rhizobium/Agrobacterium group</taxon>
        <taxon>Agrobacterium</taxon>
        <taxon>Agrobacterium tumefaciens complex</taxon>
    </lineage>
</organism>
<feature type="chain" id="PRO_0000250872" description="NADH-quinone oxidoreductase subunit I">
    <location>
        <begin position="1"/>
        <end position="163"/>
    </location>
</feature>
<feature type="domain" description="4Fe-4S ferredoxin-type 1" evidence="1">
    <location>
        <begin position="53"/>
        <end position="83"/>
    </location>
</feature>
<feature type="domain" description="4Fe-4S ferredoxin-type 2" evidence="1">
    <location>
        <begin position="94"/>
        <end position="123"/>
    </location>
</feature>
<feature type="binding site" evidence="1">
    <location>
        <position position="63"/>
    </location>
    <ligand>
        <name>[4Fe-4S] cluster</name>
        <dbReference type="ChEBI" id="CHEBI:49883"/>
        <label>1</label>
    </ligand>
</feature>
<feature type="binding site" evidence="1">
    <location>
        <position position="66"/>
    </location>
    <ligand>
        <name>[4Fe-4S] cluster</name>
        <dbReference type="ChEBI" id="CHEBI:49883"/>
        <label>1</label>
    </ligand>
</feature>
<feature type="binding site" evidence="1">
    <location>
        <position position="69"/>
    </location>
    <ligand>
        <name>[4Fe-4S] cluster</name>
        <dbReference type="ChEBI" id="CHEBI:49883"/>
        <label>1</label>
    </ligand>
</feature>
<feature type="binding site" evidence="1">
    <location>
        <position position="73"/>
    </location>
    <ligand>
        <name>[4Fe-4S] cluster</name>
        <dbReference type="ChEBI" id="CHEBI:49883"/>
        <label>2</label>
    </ligand>
</feature>
<feature type="binding site" evidence="1">
    <location>
        <position position="103"/>
    </location>
    <ligand>
        <name>[4Fe-4S] cluster</name>
        <dbReference type="ChEBI" id="CHEBI:49883"/>
        <label>2</label>
    </ligand>
</feature>
<feature type="binding site" evidence="1">
    <location>
        <position position="106"/>
    </location>
    <ligand>
        <name>[4Fe-4S] cluster</name>
        <dbReference type="ChEBI" id="CHEBI:49883"/>
        <label>2</label>
    </ligand>
</feature>
<feature type="binding site" evidence="1">
    <location>
        <position position="109"/>
    </location>
    <ligand>
        <name>[4Fe-4S] cluster</name>
        <dbReference type="ChEBI" id="CHEBI:49883"/>
        <label>2</label>
    </ligand>
</feature>
<feature type="binding site" evidence="1">
    <location>
        <position position="113"/>
    </location>
    <ligand>
        <name>[4Fe-4S] cluster</name>
        <dbReference type="ChEBI" id="CHEBI:49883"/>
        <label>1</label>
    </ligand>
</feature>
<evidence type="ECO:0000255" key="1">
    <source>
        <dbReference type="HAMAP-Rule" id="MF_01351"/>
    </source>
</evidence>
<reference key="1">
    <citation type="journal article" date="2001" name="Science">
        <title>The genome of the natural genetic engineer Agrobacterium tumefaciens C58.</title>
        <authorList>
            <person name="Wood D.W."/>
            <person name="Setubal J.C."/>
            <person name="Kaul R."/>
            <person name="Monks D.E."/>
            <person name="Kitajima J.P."/>
            <person name="Okura V.K."/>
            <person name="Zhou Y."/>
            <person name="Chen L."/>
            <person name="Wood G.E."/>
            <person name="Almeida N.F. Jr."/>
            <person name="Woo L."/>
            <person name="Chen Y."/>
            <person name="Paulsen I.T."/>
            <person name="Eisen J.A."/>
            <person name="Karp P.D."/>
            <person name="Bovee D. Sr."/>
            <person name="Chapman P."/>
            <person name="Clendenning J."/>
            <person name="Deatherage G."/>
            <person name="Gillet W."/>
            <person name="Grant C."/>
            <person name="Kutyavin T."/>
            <person name="Levy R."/>
            <person name="Li M.-J."/>
            <person name="McClelland E."/>
            <person name="Palmieri A."/>
            <person name="Raymond C."/>
            <person name="Rouse G."/>
            <person name="Saenphimmachak C."/>
            <person name="Wu Z."/>
            <person name="Romero P."/>
            <person name="Gordon D."/>
            <person name="Zhang S."/>
            <person name="Yoo H."/>
            <person name="Tao Y."/>
            <person name="Biddle P."/>
            <person name="Jung M."/>
            <person name="Krespan W."/>
            <person name="Perry M."/>
            <person name="Gordon-Kamm B."/>
            <person name="Liao L."/>
            <person name="Kim S."/>
            <person name="Hendrick C."/>
            <person name="Zhao Z.-Y."/>
            <person name="Dolan M."/>
            <person name="Chumley F."/>
            <person name="Tingey S.V."/>
            <person name="Tomb J.-F."/>
            <person name="Gordon M.P."/>
            <person name="Olson M.V."/>
            <person name="Nester E.W."/>
        </authorList>
    </citation>
    <scope>NUCLEOTIDE SEQUENCE [LARGE SCALE GENOMIC DNA]</scope>
    <source>
        <strain>C58 / ATCC 33970</strain>
    </source>
</reference>
<reference key="2">
    <citation type="journal article" date="2001" name="Science">
        <title>Genome sequence of the plant pathogen and biotechnology agent Agrobacterium tumefaciens C58.</title>
        <authorList>
            <person name="Goodner B."/>
            <person name="Hinkle G."/>
            <person name="Gattung S."/>
            <person name="Miller N."/>
            <person name="Blanchard M."/>
            <person name="Qurollo B."/>
            <person name="Goldman B.S."/>
            <person name="Cao Y."/>
            <person name="Askenazi M."/>
            <person name="Halling C."/>
            <person name="Mullin L."/>
            <person name="Houmiel K."/>
            <person name="Gordon J."/>
            <person name="Vaudin M."/>
            <person name="Iartchouk O."/>
            <person name="Epp A."/>
            <person name="Liu F."/>
            <person name="Wollam C."/>
            <person name="Allinger M."/>
            <person name="Doughty D."/>
            <person name="Scott C."/>
            <person name="Lappas C."/>
            <person name="Markelz B."/>
            <person name="Flanagan C."/>
            <person name="Crowell C."/>
            <person name="Gurson J."/>
            <person name="Lomo C."/>
            <person name="Sear C."/>
            <person name="Strub G."/>
            <person name="Cielo C."/>
            <person name="Slater S."/>
        </authorList>
    </citation>
    <scope>NUCLEOTIDE SEQUENCE [LARGE SCALE GENOMIC DNA]</scope>
    <source>
        <strain>C58 / ATCC 33970</strain>
    </source>
</reference>
<keyword id="KW-0004">4Fe-4S</keyword>
<keyword id="KW-0997">Cell inner membrane</keyword>
<keyword id="KW-1003">Cell membrane</keyword>
<keyword id="KW-0408">Iron</keyword>
<keyword id="KW-0411">Iron-sulfur</keyword>
<keyword id="KW-0472">Membrane</keyword>
<keyword id="KW-0479">Metal-binding</keyword>
<keyword id="KW-0520">NAD</keyword>
<keyword id="KW-0874">Quinone</keyword>
<keyword id="KW-1185">Reference proteome</keyword>
<keyword id="KW-0677">Repeat</keyword>
<keyword id="KW-1278">Translocase</keyword>
<keyword id="KW-0830">Ubiquinone</keyword>
<comment type="function">
    <text evidence="1">NDH-1 shuttles electrons from NADH, via FMN and iron-sulfur (Fe-S) centers, to quinones in the respiratory chain. The immediate electron acceptor for the enzyme in this species is believed to be ubiquinone. Couples the redox reaction to proton translocation (for every two electrons transferred, four hydrogen ions are translocated across the cytoplasmic membrane), and thus conserves the redox energy in a proton gradient.</text>
</comment>
<comment type="catalytic activity">
    <reaction evidence="1">
        <text>a quinone + NADH + 5 H(+)(in) = a quinol + NAD(+) + 4 H(+)(out)</text>
        <dbReference type="Rhea" id="RHEA:57888"/>
        <dbReference type="ChEBI" id="CHEBI:15378"/>
        <dbReference type="ChEBI" id="CHEBI:24646"/>
        <dbReference type="ChEBI" id="CHEBI:57540"/>
        <dbReference type="ChEBI" id="CHEBI:57945"/>
        <dbReference type="ChEBI" id="CHEBI:132124"/>
    </reaction>
</comment>
<comment type="cofactor">
    <cofactor evidence="1">
        <name>[4Fe-4S] cluster</name>
        <dbReference type="ChEBI" id="CHEBI:49883"/>
    </cofactor>
    <text evidence="1">Binds 2 [4Fe-4S] clusters per subunit.</text>
</comment>
<comment type="subunit">
    <text evidence="1">NDH-1 is composed of 14 different subunits. Subunits NuoA, H, J, K, L, M, N constitute the membrane sector of the complex.</text>
</comment>
<comment type="subcellular location">
    <subcellularLocation>
        <location evidence="1">Cell inner membrane</location>
        <topology evidence="1">Peripheral membrane protein</topology>
    </subcellularLocation>
</comment>
<comment type="similarity">
    <text evidence="1">Belongs to the complex I 23 kDa subunit family.</text>
</comment>
<gene>
    <name evidence="1" type="primary">nuoI</name>
    <name type="ordered locus">Atu1278</name>
    <name type="ORF">AGR_C_2355</name>
</gene>